<feature type="chain" id="PRO_0000423278" description="Sorting nexin-6">
    <location>
        <begin position="1"/>
        <end position="406"/>
    </location>
</feature>
<feature type="initiator methionine" description="Removed; alternate" evidence="3">
    <location>
        <position position="1"/>
    </location>
</feature>
<feature type="chain" id="PRO_0000236198" description="Sorting nexin-6, N-terminally processed">
    <location>
        <begin position="2"/>
        <end position="406"/>
    </location>
</feature>
<feature type="domain" description="PX" evidence="4">
    <location>
        <begin position="26"/>
        <end position="173"/>
    </location>
</feature>
<feature type="domain" description="BAR" evidence="7">
    <location>
        <begin position="203"/>
        <end position="406"/>
    </location>
</feature>
<feature type="region of interest" description="Interaction with PIM1" evidence="3">
    <location>
        <begin position="2"/>
        <end position="179"/>
    </location>
</feature>
<feature type="region of interest" description="Membrane-binding amphipathic helix" evidence="3">
    <location>
        <begin position="182"/>
        <end position="199"/>
    </location>
</feature>
<feature type="binding site" evidence="2">
    <location>
        <begin position="41"/>
        <end position="47"/>
    </location>
    <ligand>
        <name>a 1,2-diacyl-sn-glycero-3-phospho-(1D-myo-inositol-4,5-bisphosphate)</name>
        <dbReference type="ChEBI" id="CHEBI:58456"/>
    </ligand>
</feature>
<feature type="binding site" evidence="2">
    <location>
        <begin position="100"/>
        <end position="106"/>
    </location>
    <ligand>
        <name>a 1,2-diacyl-sn-glycero-3-phospho-(1D-myo-inositol-4,5-bisphosphate)</name>
        <dbReference type="ChEBI" id="CHEBI:58456"/>
    </ligand>
</feature>
<feature type="binding site" evidence="2">
    <location>
        <begin position="114"/>
        <end position="117"/>
    </location>
    <ligand>
        <name>a 1,2-diacyl-sn-glycero-3-phospho-(1D-myo-inositol-4,5-bisphosphate)</name>
        <dbReference type="ChEBI" id="CHEBI:58456"/>
    </ligand>
</feature>
<feature type="modified residue" description="N-acetylmethionine" evidence="3">
    <location>
        <position position="1"/>
    </location>
</feature>
<feature type="modified residue" description="N-acetylmethionine; in Sorting nexin-6, N-terminally processed" evidence="3">
    <location>
        <position position="2"/>
    </location>
</feature>
<feature type="modified residue" description="Phosphoserine" evidence="3">
    <location>
        <position position="116"/>
    </location>
</feature>
<feature type="modified residue" description="Phosphoserine" evidence="3">
    <location>
        <position position="194"/>
    </location>
</feature>
<feature type="sequence conflict" description="In Ref. 2; AAH61028." evidence="7" ref="2">
    <original>K</original>
    <variation>N</variation>
    <location>
        <position position="47"/>
    </location>
</feature>
<keyword id="KW-0007">Acetylation</keyword>
<keyword id="KW-0963">Cytoplasm</keyword>
<keyword id="KW-0968">Cytoplasmic vesicle</keyword>
<keyword id="KW-0903">Direct protein sequencing</keyword>
<keyword id="KW-0967">Endosome</keyword>
<keyword id="KW-0446">Lipid-binding</keyword>
<keyword id="KW-0472">Membrane</keyword>
<keyword id="KW-0539">Nucleus</keyword>
<keyword id="KW-0597">Phosphoprotein</keyword>
<keyword id="KW-0653">Protein transport</keyword>
<keyword id="KW-1185">Reference proteome</keyword>
<keyword id="KW-0813">Transport</keyword>
<reference key="1">
    <citation type="journal article" date="2005" name="Science">
        <title>The transcriptional landscape of the mammalian genome.</title>
        <authorList>
            <person name="Carninci P."/>
            <person name="Kasukawa T."/>
            <person name="Katayama S."/>
            <person name="Gough J."/>
            <person name="Frith M.C."/>
            <person name="Maeda N."/>
            <person name="Oyama R."/>
            <person name="Ravasi T."/>
            <person name="Lenhard B."/>
            <person name="Wells C."/>
            <person name="Kodzius R."/>
            <person name="Shimokawa K."/>
            <person name="Bajic V.B."/>
            <person name="Brenner S.E."/>
            <person name="Batalov S."/>
            <person name="Forrest A.R."/>
            <person name="Zavolan M."/>
            <person name="Davis M.J."/>
            <person name="Wilming L.G."/>
            <person name="Aidinis V."/>
            <person name="Allen J.E."/>
            <person name="Ambesi-Impiombato A."/>
            <person name="Apweiler R."/>
            <person name="Aturaliya R.N."/>
            <person name="Bailey T.L."/>
            <person name="Bansal M."/>
            <person name="Baxter L."/>
            <person name="Beisel K.W."/>
            <person name="Bersano T."/>
            <person name="Bono H."/>
            <person name="Chalk A.M."/>
            <person name="Chiu K.P."/>
            <person name="Choudhary V."/>
            <person name="Christoffels A."/>
            <person name="Clutterbuck D.R."/>
            <person name="Crowe M.L."/>
            <person name="Dalla E."/>
            <person name="Dalrymple B.P."/>
            <person name="de Bono B."/>
            <person name="Della Gatta G."/>
            <person name="di Bernardo D."/>
            <person name="Down T."/>
            <person name="Engstrom P."/>
            <person name="Fagiolini M."/>
            <person name="Faulkner G."/>
            <person name="Fletcher C.F."/>
            <person name="Fukushima T."/>
            <person name="Furuno M."/>
            <person name="Futaki S."/>
            <person name="Gariboldi M."/>
            <person name="Georgii-Hemming P."/>
            <person name="Gingeras T.R."/>
            <person name="Gojobori T."/>
            <person name="Green R.E."/>
            <person name="Gustincich S."/>
            <person name="Harbers M."/>
            <person name="Hayashi Y."/>
            <person name="Hensch T.K."/>
            <person name="Hirokawa N."/>
            <person name="Hill D."/>
            <person name="Huminiecki L."/>
            <person name="Iacono M."/>
            <person name="Ikeo K."/>
            <person name="Iwama A."/>
            <person name="Ishikawa T."/>
            <person name="Jakt M."/>
            <person name="Kanapin A."/>
            <person name="Katoh M."/>
            <person name="Kawasawa Y."/>
            <person name="Kelso J."/>
            <person name="Kitamura H."/>
            <person name="Kitano H."/>
            <person name="Kollias G."/>
            <person name="Krishnan S.P."/>
            <person name="Kruger A."/>
            <person name="Kummerfeld S.K."/>
            <person name="Kurochkin I.V."/>
            <person name="Lareau L.F."/>
            <person name="Lazarevic D."/>
            <person name="Lipovich L."/>
            <person name="Liu J."/>
            <person name="Liuni S."/>
            <person name="McWilliam S."/>
            <person name="Madan Babu M."/>
            <person name="Madera M."/>
            <person name="Marchionni L."/>
            <person name="Matsuda H."/>
            <person name="Matsuzawa S."/>
            <person name="Miki H."/>
            <person name="Mignone F."/>
            <person name="Miyake S."/>
            <person name="Morris K."/>
            <person name="Mottagui-Tabar S."/>
            <person name="Mulder N."/>
            <person name="Nakano N."/>
            <person name="Nakauchi H."/>
            <person name="Ng P."/>
            <person name="Nilsson R."/>
            <person name="Nishiguchi S."/>
            <person name="Nishikawa S."/>
            <person name="Nori F."/>
            <person name="Ohara O."/>
            <person name="Okazaki Y."/>
            <person name="Orlando V."/>
            <person name="Pang K.C."/>
            <person name="Pavan W.J."/>
            <person name="Pavesi G."/>
            <person name="Pesole G."/>
            <person name="Petrovsky N."/>
            <person name="Piazza S."/>
            <person name="Reed J."/>
            <person name="Reid J.F."/>
            <person name="Ring B.Z."/>
            <person name="Ringwald M."/>
            <person name="Rost B."/>
            <person name="Ruan Y."/>
            <person name="Salzberg S.L."/>
            <person name="Sandelin A."/>
            <person name="Schneider C."/>
            <person name="Schoenbach C."/>
            <person name="Sekiguchi K."/>
            <person name="Semple C.A."/>
            <person name="Seno S."/>
            <person name="Sessa L."/>
            <person name="Sheng Y."/>
            <person name="Shibata Y."/>
            <person name="Shimada H."/>
            <person name="Shimada K."/>
            <person name="Silva D."/>
            <person name="Sinclair B."/>
            <person name="Sperling S."/>
            <person name="Stupka E."/>
            <person name="Sugiura K."/>
            <person name="Sultana R."/>
            <person name="Takenaka Y."/>
            <person name="Taki K."/>
            <person name="Tammoja K."/>
            <person name="Tan S.L."/>
            <person name="Tang S."/>
            <person name="Taylor M.S."/>
            <person name="Tegner J."/>
            <person name="Teichmann S.A."/>
            <person name="Ueda H.R."/>
            <person name="van Nimwegen E."/>
            <person name="Verardo R."/>
            <person name="Wei C.L."/>
            <person name="Yagi K."/>
            <person name="Yamanishi H."/>
            <person name="Zabarovsky E."/>
            <person name="Zhu S."/>
            <person name="Zimmer A."/>
            <person name="Hide W."/>
            <person name="Bult C."/>
            <person name="Grimmond S.M."/>
            <person name="Teasdale R.D."/>
            <person name="Liu E.T."/>
            <person name="Brusic V."/>
            <person name="Quackenbush J."/>
            <person name="Wahlestedt C."/>
            <person name="Mattick J.S."/>
            <person name="Hume D.A."/>
            <person name="Kai C."/>
            <person name="Sasaki D."/>
            <person name="Tomaru Y."/>
            <person name="Fukuda S."/>
            <person name="Kanamori-Katayama M."/>
            <person name="Suzuki M."/>
            <person name="Aoki J."/>
            <person name="Arakawa T."/>
            <person name="Iida J."/>
            <person name="Imamura K."/>
            <person name="Itoh M."/>
            <person name="Kato T."/>
            <person name="Kawaji H."/>
            <person name="Kawagashira N."/>
            <person name="Kawashima T."/>
            <person name="Kojima M."/>
            <person name="Kondo S."/>
            <person name="Konno H."/>
            <person name="Nakano K."/>
            <person name="Ninomiya N."/>
            <person name="Nishio T."/>
            <person name="Okada M."/>
            <person name="Plessy C."/>
            <person name="Shibata K."/>
            <person name="Shiraki T."/>
            <person name="Suzuki S."/>
            <person name="Tagami M."/>
            <person name="Waki K."/>
            <person name="Watahiki A."/>
            <person name="Okamura-Oho Y."/>
            <person name="Suzuki H."/>
            <person name="Kawai J."/>
            <person name="Hayashizaki Y."/>
        </authorList>
    </citation>
    <scope>NUCLEOTIDE SEQUENCE [LARGE SCALE MRNA]</scope>
    <source>
        <strain>C57BL/6J</strain>
    </source>
</reference>
<reference key="2">
    <citation type="journal article" date="2004" name="Genome Res.">
        <title>The status, quality, and expansion of the NIH full-length cDNA project: the Mammalian Gene Collection (MGC).</title>
        <authorList>
            <consortium name="The MGC Project Team"/>
        </authorList>
    </citation>
    <scope>NUCLEOTIDE SEQUENCE [LARGE SCALE MRNA]</scope>
    <source>
        <tissue>Brain</tissue>
    </source>
</reference>
<reference key="3">
    <citation type="submission" date="2009-01" db="UniProtKB">
        <authorList>
            <person name="Lubec G."/>
            <person name="Sunyer B."/>
            <person name="Chen W.-Q."/>
        </authorList>
    </citation>
    <scope>PROTEIN SEQUENCE OF 376-386</scope>
    <scope>IDENTIFICATION BY MASS SPECTROMETRY</scope>
    <source>
        <strain>OF1</strain>
        <tissue>Hippocampus</tissue>
    </source>
</reference>
<reference key="4">
    <citation type="journal article" date="2008" name="FASEB J.">
        <title>An epidermal growth factor (EGF) -dependent interaction between GIT1 and sorting nexin 6 promotes degradation of the EGF receptor.</title>
        <authorList>
            <person name="Cavet M.E."/>
            <person name="Pang J."/>
            <person name="Yin G."/>
            <person name="Berk B.C."/>
        </authorList>
    </citation>
    <scope>FUNCTION</scope>
    <scope>INTERACTION WITH GIT1</scope>
</reference>
<reference key="5">
    <citation type="journal article" date="2010" name="Cell">
        <title>A tissue-specific atlas of mouse protein phosphorylation and expression.</title>
        <authorList>
            <person name="Huttlin E.L."/>
            <person name="Jedrychowski M.P."/>
            <person name="Elias J.E."/>
            <person name="Goswami T."/>
            <person name="Rad R."/>
            <person name="Beausoleil S.A."/>
            <person name="Villen J."/>
            <person name="Haas W."/>
            <person name="Sowa M.E."/>
            <person name="Gygi S.P."/>
        </authorList>
    </citation>
    <scope>IDENTIFICATION BY MASS SPECTROMETRY [LARGE SCALE ANALYSIS]</scope>
    <source>
        <tissue>Brain</tissue>
        <tissue>Brown adipose tissue</tissue>
        <tissue>Heart</tissue>
        <tissue>Kidney</tissue>
        <tissue>Liver</tissue>
        <tissue>Lung</tissue>
        <tissue>Pancreas</tissue>
        <tissue>Spleen</tissue>
        <tissue>Testis</tissue>
    </source>
</reference>
<reference key="6">
    <citation type="journal article" date="2010" name="FASEB J.">
        <title>Tumor suppressor p27(Kip1) undergoes endolysosomal degradation through its interaction with sorting nexin 6.</title>
        <authorList>
            <person name="Fuster J.J."/>
            <person name="Gonzalez J.M."/>
            <person name="Edo M.D."/>
            <person name="Viana R."/>
            <person name="Boya P."/>
            <person name="Cervera J."/>
            <person name="Verges M."/>
            <person name="Rivera J."/>
            <person name="Andres V."/>
        </authorList>
    </citation>
    <scope>FUNCTION</scope>
    <scope>SUBCELLULAR LOCATION</scope>
    <scope>INTERACTION WITH CDKN1B</scope>
</reference>
<evidence type="ECO:0000250" key="1"/>
<evidence type="ECO:0000250" key="2">
    <source>
        <dbReference type="UniProtKB" id="B1H267"/>
    </source>
</evidence>
<evidence type="ECO:0000250" key="3">
    <source>
        <dbReference type="UniProtKB" id="Q9UNH7"/>
    </source>
</evidence>
<evidence type="ECO:0000255" key="4">
    <source>
        <dbReference type="PROSITE-ProRule" id="PRU00147"/>
    </source>
</evidence>
<evidence type="ECO:0000269" key="5">
    <source>
    </source>
</evidence>
<evidence type="ECO:0000269" key="6">
    <source>
    </source>
</evidence>
<evidence type="ECO:0000305" key="7"/>
<comment type="function">
    <text evidence="3 5 6">Involved in several stages of intracellular trafficking. Interacts with membranes phosphatidylinositol 3,4-bisphosphate and/or phosphatidylinositol 4,5-bisphosphate (Probable). Acts in part as component of the retromer membrane-deforming SNX-BAR subcomplex. The SNX-BAR retromer mediates retrograde transport of cargo proteins from endosomes to the trans-Golgi network (TGN) and is involved in endosome-to-plasma membrane transport for cargo protein recycling. The SNX-BAR subcomplex functions to deform the donor membrane into a tubular profile called endosome-to-TGN transport carrier (ETC). Does not have in vitro vesicle-to-membrane remodeling activity (By similarity). Involved in retrograde endosome-to-TGN transport of lysosomal enzyme receptor IGF2R. May function as link between transport vesicles and dynactin. Negatively regulates retrograde transport of BACE1 from the cell surface to the trans-Golgi network. Involved in E-cadherin sorting and degradation; inhibits PIP5K1C-mediated E-cadherin degradation (By similarity). In association with GIT1 involved in EGFR degradation (PubMed:18523162). Promotes lysosomal degradation of CDKN1B (PubMed:20228253). May contribute to transcription regulation (By similarity).</text>
</comment>
<comment type="subunit">
    <text evidence="3 5 6">Forms heterodimers with BAR domain-containing sorting nexins SNX1 and SNX2. The heterodimers are proposed to self-assemble into helical arrays on the membrane to stabilize and expand local membrane curvature underlying endosomal tubule formation. Thought to be a component of the originally described retromer complex (also called SNX-BAR retromer) which is a pentamer containing the heterotrimeric retromer cargo-selective complex (CSC), also described as vacuolar protein sorting subcomplex (VPS), and a heterodimeric membrane-deforming subcomplex formed between SNX1 or SNX2 and SNX5 or SNX6 (also called SNX-BAR subcomplex); the respective CSC and SNX-BAR subcomplexes associate with low affinity (By similarity). Interacts with SNX1, SNX2, VPS26A, VPS29, VPS35, TGFB receptors, BACE1, BRMS1, PIP5K1C. Interacts with DCTN1; the association with DCTN1 is involved in movement of retromer-c ontaining vesicles toward the TGN. Interacts with PIM1; translocating SNX6 to the nucleus (By similarity). Interacts with CDKN1B and GIT1 (PubMed:18523162, PubMed:20228253).</text>
</comment>
<comment type="subcellular location">
    <subcellularLocation>
        <location evidence="6">Early endosome membrane</location>
        <topology evidence="6">Peripheral membrane protein</topology>
        <orientation evidence="6">Cytoplasmic side</orientation>
    </subcellularLocation>
    <subcellularLocation>
        <location evidence="3">Cytoplasmic vesicle</location>
    </subcellularLocation>
    <subcellularLocation>
        <location evidence="3">Cytoplasm</location>
    </subcellularLocation>
    <subcellularLocation>
        <location evidence="3">Nucleus</location>
    </subcellularLocation>
    <text evidence="3">Interaction with SNX1 or SNX2 promotes location at endosome membranes (By similarity). Only a minor proportion is seen in the nucleus (By similarity).</text>
</comment>
<comment type="domain">
    <text evidence="1">The PX domain mediates interaction with membranes enriched in phosphatidylinositol 3,4-bisphosphate and/or phosphatidylinositol 4,5-bisphosphate.</text>
</comment>
<comment type="domain">
    <text evidence="3">The BAR domain is able to sense membrane curvature upon dimerization. Membrane remodeling seems to implicate insertion of an amphipathic helix (AH) in the membrane (By similarity).</text>
</comment>
<comment type="PTM">
    <text evidence="3">In vitro phosphorylated by PIM1; not affecting PIM1-dependent nuclear translocation (By similarity).</text>
</comment>
<comment type="similarity">
    <text evidence="7">Belongs to the sorting nexin family.</text>
</comment>
<accession>Q6P8X1</accession>
<accession>Q9CZ03</accession>
<sequence>MMEGLDDGPDFLSEEDRGLKAINVDLQSDAALQVDISDALSERDRVKFTVHTKSSLPNFKQNEFSVVRQHEEFIWLHDSFVENEDYAGYIIPPAPPRPDFDASREKLQKLGEGEGSMTKEEFTKMKQELEAEYLAIFKKTVAMHEVFLCRVAAHPILRKDLNFHVFLEYNQDLSVRGKNKKEKLEDFFKNMVKSADGVIVSGVKDVDDFFEHERTFLLEYHNRVKDASAKSDRMTRSHKSAADDYNRIGSSLYALGTQDSTDICKFFLKVSELFDKTRKIEARVSADEDLKLSDLLKYYLRESQAAKDLLYRRSRSLVDYENANKALDKARAKNKDVLQAETSQQLCCQKFEKISESAKQELIDFKTRRVAAFRKNLVELAELELKHAKGNLQLLQNCLAVLNGDT</sequence>
<name>SNX6_MOUSE</name>
<organism>
    <name type="scientific">Mus musculus</name>
    <name type="common">Mouse</name>
    <dbReference type="NCBI Taxonomy" id="10090"/>
    <lineage>
        <taxon>Eukaryota</taxon>
        <taxon>Metazoa</taxon>
        <taxon>Chordata</taxon>
        <taxon>Craniata</taxon>
        <taxon>Vertebrata</taxon>
        <taxon>Euteleostomi</taxon>
        <taxon>Mammalia</taxon>
        <taxon>Eutheria</taxon>
        <taxon>Euarchontoglires</taxon>
        <taxon>Glires</taxon>
        <taxon>Rodentia</taxon>
        <taxon>Myomorpha</taxon>
        <taxon>Muroidea</taxon>
        <taxon>Muridae</taxon>
        <taxon>Murinae</taxon>
        <taxon>Mus</taxon>
        <taxon>Mus</taxon>
    </lineage>
</organism>
<gene>
    <name type="primary">Snx6</name>
</gene>
<proteinExistence type="evidence at protein level"/>
<dbReference type="EMBL" id="AK013158">
    <property type="protein sequence ID" value="BAB28684.1"/>
    <property type="molecule type" value="mRNA"/>
</dbReference>
<dbReference type="EMBL" id="BC061028">
    <property type="protein sequence ID" value="AAH61028.1"/>
    <property type="molecule type" value="mRNA"/>
</dbReference>
<dbReference type="CCDS" id="CCDS36447.1"/>
<dbReference type="RefSeq" id="NP_081274.2">
    <property type="nucleotide sequence ID" value="NM_026998.3"/>
</dbReference>
<dbReference type="SMR" id="Q6P8X1"/>
<dbReference type="BioGRID" id="215205">
    <property type="interactions" value="27"/>
</dbReference>
<dbReference type="FunCoup" id="Q6P8X1">
    <property type="interactions" value="3202"/>
</dbReference>
<dbReference type="IntAct" id="Q6P8X1">
    <property type="interactions" value="4"/>
</dbReference>
<dbReference type="MINT" id="Q6P8X1"/>
<dbReference type="STRING" id="10090.ENSMUSP00000005798"/>
<dbReference type="GlyGen" id="Q6P8X1">
    <property type="glycosylation" value="1 site, 1 O-linked glycan (1 site)"/>
</dbReference>
<dbReference type="iPTMnet" id="Q6P8X1"/>
<dbReference type="PhosphoSitePlus" id="Q6P8X1"/>
<dbReference type="SwissPalm" id="Q6P8X1"/>
<dbReference type="REPRODUCTION-2DPAGE" id="Q6P8X1"/>
<dbReference type="jPOST" id="Q6P8X1"/>
<dbReference type="PaxDb" id="10090-ENSMUSP00000005798"/>
<dbReference type="PeptideAtlas" id="Q6P8X1"/>
<dbReference type="ProteomicsDB" id="261305"/>
<dbReference type="Pumba" id="Q6P8X1"/>
<dbReference type="Antibodypedia" id="23146">
    <property type="antibodies" value="303 antibodies from 27 providers"/>
</dbReference>
<dbReference type="DNASU" id="72183"/>
<dbReference type="Ensembl" id="ENSMUST00000005798.9">
    <property type="protein sequence ID" value="ENSMUSP00000005798.9"/>
    <property type="gene ID" value="ENSMUSG00000005656.10"/>
</dbReference>
<dbReference type="GeneID" id="72183"/>
<dbReference type="KEGG" id="mmu:72183"/>
<dbReference type="UCSC" id="uc007nnv.1">
    <property type="organism name" value="mouse"/>
</dbReference>
<dbReference type="AGR" id="MGI:1919433"/>
<dbReference type="CTD" id="58533"/>
<dbReference type="MGI" id="MGI:1919433">
    <property type="gene designation" value="Snx6"/>
</dbReference>
<dbReference type="VEuPathDB" id="HostDB:ENSMUSG00000005656"/>
<dbReference type="eggNOG" id="KOG1660">
    <property type="taxonomic scope" value="Eukaryota"/>
</dbReference>
<dbReference type="GeneTree" id="ENSGT00940000154940"/>
<dbReference type="HOGENOM" id="CLU_040966_0_0_1"/>
<dbReference type="InParanoid" id="Q6P8X1"/>
<dbReference type="OMA" id="HPVFRED"/>
<dbReference type="OrthoDB" id="9976382at2759"/>
<dbReference type="PhylomeDB" id="Q6P8X1"/>
<dbReference type="TreeFam" id="TF313698"/>
<dbReference type="BioGRID-ORCS" id="72183">
    <property type="hits" value="2 hits in 76 CRISPR screens"/>
</dbReference>
<dbReference type="ChiTaRS" id="Snx6">
    <property type="organism name" value="mouse"/>
</dbReference>
<dbReference type="PRO" id="PR:Q6P8X1"/>
<dbReference type="Proteomes" id="UP000000589">
    <property type="component" value="Chromosome 12"/>
</dbReference>
<dbReference type="RNAct" id="Q6P8X1">
    <property type="molecule type" value="protein"/>
</dbReference>
<dbReference type="Bgee" id="ENSMUSG00000005656">
    <property type="expression patterns" value="Expressed in epithelium of stomach and 269 other cell types or tissues"/>
</dbReference>
<dbReference type="ExpressionAtlas" id="Q6P8X1">
    <property type="expression patterns" value="baseline and differential"/>
</dbReference>
<dbReference type="GO" id="GO:0005829">
    <property type="term" value="C:cytosol"/>
    <property type="evidence" value="ECO:0007669"/>
    <property type="project" value="GOC"/>
</dbReference>
<dbReference type="GO" id="GO:0031901">
    <property type="term" value="C:early endosome membrane"/>
    <property type="evidence" value="ECO:0000250"/>
    <property type="project" value="UniProtKB"/>
</dbReference>
<dbReference type="GO" id="GO:0098978">
    <property type="term" value="C:glutamatergic synapse"/>
    <property type="evidence" value="ECO:0000314"/>
    <property type="project" value="SynGO"/>
</dbReference>
<dbReference type="GO" id="GO:0005764">
    <property type="term" value="C:lysosome"/>
    <property type="evidence" value="ECO:0007669"/>
    <property type="project" value="Ensembl"/>
</dbReference>
<dbReference type="GO" id="GO:0005634">
    <property type="term" value="C:nucleus"/>
    <property type="evidence" value="ECO:0007669"/>
    <property type="project" value="UniProtKB-SubCell"/>
</dbReference>
<dbReference type="GO" id="GO:0098842">
    <property type="term" value="C:postsynaptic early endosome"/>
    <property type="evidence" value="ECO:0000314"/>
    <property type="project" value="SynGO"/>
</dbReference>
<dbReference type="GO" id="GO:0030904">
    <property type="term" value="C:retromer complex"/>
    <property type="evidence" value="ECO:0000250"/>
    <property type="project" value="UniProtKB"/>
</dbReference>
<dbReference type="GO" id="GO:0097422">
    <property type="term" value="C:tubular endosome"/>
    <property type="evidence" value="ECO:0000250"/>
    <property type="project" value="UniProtKB"/>
</dbReference>
<dbReference type="GO" id="GO:0034452">
    <property type="term" value="F:dynactin binding"/>
    <property type="evidence" value="ECO:0000250"/>
    <property type="project" value="UniProtKB"/>
</dbReference>
<dbReference type="GO" id="GO:0035091">
    <property type="term" value="F:phosphatidylinositol binding"/>
    <property type="evidence" value="ECO:0007669"/>
    <property type="project" value="InterPro"/>
</dbReference>
<dbReference type="GO" id="GO:0042803">
    <property type="term" value="F:protein homodimerization activity"/>
    <property type="evidence" value="ECO:0007669"/>
    <property type="project" value="Ensembl"/>
</dbReference>
<dbReference type="GO" id="GO:0034713">
    <property type="term" value="F:type I transforming growth factor beta receptor binding"/>
    <property type="evidence" value="ECO:0000353"/>
    <property type="project" value="UniProtKB"/>
</dbReference>
<dbReference type="GO" id="GO:1904646">
    <property type="term" value="P:cellular response to amyloid-beta"/>
    <property type="evidence" value="ECO:0007669"/>
    <property type="project" value="Ensembl"/>
</dbReference>
<dbReference type="GO" id="GO:0071364">
    <property type="term" value="P:cellular response to epidermal growth factor stimulus"/>
    <property type="evidence" value="ECO:0007669"/>
    <property type="project" value="Ensembl"/>
</dbReference>
<dbReference type="GO" id="GO:0006886">
    <property type="term" value="P:intracellular protein transport"/>
    <property type="evidence" value="ECO:0000250"/>
    <property type="project" value="UniProtKB"/>
</dbReference>
<dbReference type="GO" id="GO:0045892">
    <property type="term" value="P:negative regulation of DNA-templated transcription"/>
    <property type="evidence" value="ECO:0007669"/>
    <property type="project" value="Ensembl"/>
</dbReference>
<dbReference type="GO" id="GO:0043524">
    <property type="term" value="P:negative regulation of neuron apoptotic process"/>
    <property type="evidence" value="ECO:0007669"/>
    <property type="project" value="Ensembl"/>
</dbReference>
<dbReference type="GO" id="GO:0030512">
    <property type="term" value="P:negative regulation of transforming growth factor beta receptor signaling pathway"/>
    <property type="evidence" value="ECO:0007669"/>
    <property type="project" value="Ensembl"/>
</dbReference>
<dbReference type="GO" id="GO:0099072">
    <property type="term" value="P:regulation of postsynaptic membrane neurotransmitter receptor levels"/>
    <property type="evidence" value="ECO:0000314"/>
    <property type="project" value="SynGO"/>
</dbReference>
<dbReference type="GO" id="GO:0042147">
    <property type="term" value="P:retrograde transport, endosome to Golgi"/>
    <property type="evidence" value="ECO:0000250"/>
    <property type="project" value="UniProtKB"/>
</dbReference>
<dbReference type="CDD" id="cd07662">
    <property type="entry name" value="BAR_SNX6"/>
    <property type="match status" value="1"/>
</dbReference>
<dbReference type="CDD" id="cd07292">
    <property type="entry name" value="PX_SNX6"/>
    <property type="match status" value="1"/>
</dbReference>
<dbReference type="FunFam" id="1.20.1270.60:FF:000008">
    <property type="entry name" value="Sorting nexin"/>
    <property type="match status" value="1"/>
</dbReference>
<dbReference type="FunFam" id="3.30.1520.10:FF:000001">
    <property type="entry name" value="Sorting nexin"/>
    <property type="match status" value="1"/>
</dbReference>
<dbReference type="Gene3D" id="1.20.1270.60">
    <property type="entry name" value="Arfaptin homology (AH) domain/BAR domain"/>
    <property type="match status" value="1"/>
</dbReference>
<dbReference type="Gene3D" id="3.30.1520.10">
    <property type="entry name" value="Phox-like domain"/>
    <property type="match status" value="1"/>
</dbReference>
<dbReference type="InterPro" id="IPR027267">
    <property type="entry name" value="AH/BAR_dom_sf"/>
</dbReference>
<dbReference type="InterPro" id="IPR028657">
    <property type="entry name" value="BAR_SNX6"/>
</dbReference>
<dbReference type="InterPro" id="IPR001683">
    <property type="entry name" value="PX_dom"/>
</dbReference>
<dbReference type="InterPro" id="IPR036871">
    <property type="entry name" value="PX_dom_sf"/>
</dbReference>
<dbReference type="InterPro" id="IPR042136">
    <property type="entry name" value="PX_SNX6"/>
</dbReference>
<dbReference type="InterPro" id="IPR014637">
    <property type="entry name" value="SNX5/SNX6/SNX32"/>
</dbReference>
<dbReference type="InterPro" id="IPR015404">
    <property type="entry name" value="Vps5_C"/>
</dbReference>
<dbReference type="PANTHER" id="PTHR45850">
    <property type="entry name" value="SORTING NEXIN FAMILY MEMBER"/>
    <property type="match status" value="1"/>
</dbReference>
<dbReference type="PANTHER" id="PTHR45850:SF4">
    <property type="entry name" value="SORTING NEXIN-6"/>
    <property type="match status" value="1"/>
</dbReference>
<dbReference type="Pfam" id="PF00787">
    <property type="entry name" value="PX"/>
    <property type="match status" value="1"/>
</dbReference>
<dbReference type="Pfam" id="PF09325">
    <property type="entry name" value="Vps5"/>
    <property type="match status" value="1"/>
</dbReference>
<dbReference type="PIRSF" id="PIRSF036924">
    <property type="entry name" value="Snx5_Snx6"/>
    <property type="match status" value="1"/>
</dbReference>
<dbReference type="SUPFAM" id="SSF103657">
    <property type="entry name" value="BAR/IMD domain-like"/>
    <property type="match status" value="1"/>
</dbReference>
<dbReference type="SUPFAM" id="SSF64268">
    <property type="entry name" value="PX domain"/>
    <property type="match status" value="1"/>
</dbReference>
<dbReference type="PROSITE" id="PS50195">
    <property type="entry name" value="PX"/>
    <property type="match status" value="1"/>
</dbReference>
<protein>
    <recommendedName>
        <fullName>Sorting nexin-6</fullName>
    </recommendedName>
    <component>
        <recommendedName>
            <fullName>Sorting nexin-6, N-terminally processed</fullName>
        </recommendedName>
    </component>
</protein>